<comment type="function">
    <text evidence="1">Specifically methylates the N7 position of guanine in position 527 of 16S rRNA.</text>
</comment>
<comment type="catalytic activity">
    <reaction evidence="1">
        <text>guanosine(527) in 16S rRNA + S-adenosyl-L-methionine = N(7)-methylguanosine(527) in 16S rRNA + S-adenosyl-L-homocysteine</text>
        <dbReference type="Rhea" id="RHEA:42732"/>
        <dbReference type="Rhea" id="RHEA-COMP:10209"/>
        <dbReference type="Rhea" id="RHEA-COMP:10210"/>
        <dbReference type="ChEBI" id="CHEBI:57856"/>
        <dbReference type="ChEBI" id="CHEBI:59789"/>
        <dbReference type="ChEBI" id="CHEBI:74269"/>
        <dbReference type="ChEBI" id="CHEBI:74480"/>
        <dbReference type="EC" id="2.1.1.170"/>
    </reaction>
</comment>
<comment type="subcellular location">
    <subcellularLocation>
        <location evidence="1">Cytoplasm</location>
    </subcellularLocation>
</comment>
<comment type="similarity">
    <text evidence="1">Belongs to the methyltransferase superfamily. RNA methyltransferase RsmG family.</text>
</comment>
<reference key="1">
    <citation type="submission" date="2006-01" db="EMBL/GenBank/DDBJ databases">
        <title>Complete sequence of Novosphingobium aromaticivorans DSM 12444.</title>
        <authorList>
            <consortium name="US DOE Joint Genome Institute"/>
            <person name="Copeland A."/>
            <person name="Lucas S."/>
            <person name="Lapidus A."/>
            <person name="Barry K."/>
            <person name="Detter J.C."/>
            <person name="Glavina T."/>
            <person name="Hammon N."/>
            <person name="Israni S."/>
            <person name="Pitluck S."/>
            <person name="Chain P."/>
            <person name="Malfatti S."/>
            <person name="Shin M."/>
            <person name="Vergez L."/>
            <person name="Schmutz J."/>
            <person name="Larimer F."/>
            <person name="Land M."/>
            <person name="Kyrpides N."/>
            <person name="Ivanova N."/>
            <person name="Fredrickson J."/>
            <person name="Balkwill D."/>
            <person name="Romine M.F."/>
            <person name="Richardson P."/>
        </authorList>
    </citation>
    <scope>NUCLEOTIDE SEQUENCE [LARGE SCALE GENOMIC DNA]</scope>
    <source>
        <strain>ATCC 700278 / DSM 12444 / CCUG 56034 / CIP 105152 / NBRC 16084 / F199</strain>
    </source>
</reference>
<proteinExistence type="inferred from homology"/>
<dbReference type="EC" id="2.1.1.170" evidence="1"/>
<dbReference type="EMBL" id="CP000248">
    <property type="protein sequence ID" value="ABD24584.1"/>
    <property type="molecule type" value="Genomic_DNA"/>
</dbReference>
<dbReference type="RefSeq" id="WP_011443798.1">
    <property type="nucleotide sequence ID" value="NC_007794.1"/>
</dbReference>
<dbReference type="SMR" id="Q2GC39"/>
<dbReference type="STRING" id="279238.Saro_0135"/>
<dbReference type="KEGG" id="nar:Saro_0135"/>
<dbReference type="eggNOG" id="COG0357">
    <property type="taxonomic scope" value="Bacteria"/>
</dbReference>
<dbReference type="HOGENOM" id="CLU_065341_1_1_5"/>
<dbReference type="Proteomes" id="UP000009134">
    <property type="component" value="Chromosome"/>
</dbReference>
<dbReference type="GO" id="GO:0005829">
    <property type="term" value="C:cytosol"/>
    <property type="evidence" value="ECO:0007669"/>
    <property type="project" value="TreeGrafter"/>
</dbReference>
<dbReference type="GO" id="GO:0070043">
    <property type="term" value="F:rRNA (guanine-N7-)-methyltransferase activity"/>
    <property type="evidence" value="ECO:0007669"/>
    <property type="project" value="UniProtKB-UniRule"/>
</dbReference>
<dbReference type="CDD" id="cd02440">
    <property type="entry name" value="AdoMet_MTases"/>
    <property type="match status" value="1"/>
</dbReference>
<dbReference type="Gene3D" id="3.40.50.150">
    <property type="entry name" value="Vaccinia Virus protein VP39"/>
    <property type="match status" value="1"/>
</dbReference>
<dbReference type="HAMAP" id="MF_00074">
    <property type="entry name" value="16SrRNA_methyltr_G"/>
    <property type="match status" value="1"/>
</dbReference>
<dbReference type="InterPro" id="IPR003682">
    <property type="entry name" value="rRNA_ssu_MeTfrase_G"/>
</dbReference>
<dbReference type="InterPro" id="IPR029063">
    <property type="entry name" value="SAM-dependent_MTases_sf"/>
</dbReference>
<dbReference type="NCBIfam" id="TIGR00138">
    <property type="entry name" value="rsmG_gidB"/>
    <property type="match status" value="1"/>
</dbReference>
<dbReference type="PANTHER" id="PTHR31760">
    <property type="entry name" value="S-ADENOSYL-L-METHIONINE-DEPENDENT METHYLTRANSFERASES SUPERFAMILY PROTEIN"/>
    <property type="match status" value="1"/>
</dbReference>
<dbReference type="PANTHER" id="PTHR31760:SF0">
    <property type="entry name" value="S-ADENOSYL-L-METHIONINE-DEPENDENT METHYLTRANSFERASES SUPERFAMILY PROTEIN"/>
    <property type="match status" value="1"/>
</dbReference>
<dbReference type="Pfam" id="PF02527">
    <property type="entry name" value="GidB"/>
    <property type="match status" value="1"/>
</dbReference>
<dbReference type="SUPFAM" id="SSF53335">
    <property type="entry name" value="S-adenosyl-L-methionine-dependent methyltransferases"/>
    <property type="match status" value="1"/>
</dbReference>
<accession>Q2GC39</accession>
<name>RSMG_NOVAD</name>
<evidence type="ECO:0000255" key="1">
    <source>
        <dbReference type="HAMAP-Rule" id="MF_00074"/>
    </source>
</evidence>
<protein>
    <recommendedName>
        <fullName evidence="1">Ribosomal RNA small subunit methyltransferase G</fullName>
        <ecNumber evidence="1">2.1.1.170</ecNumber>
    </recommendedName>
    <alternativeName>
        <fullName evidence="1">16S rRNA 7-methylguanosine methyltransferase</fullName>
        <shortName evidence="1">16S rRNA m7G methyltransferase</shortName>
    </alternativeName>
</protein>
<keyword id="KW-0963">Cytoplasm</keyword>
<keyword id="KW-0489">Methyltransferase</keyword>
<keyword id="KW-1185">Reference proteome</keyword>
<keyword id="KW-0698">rRNA processing</keyword>
<keyword id="KW-0949">S-adenosyl-L-methionine</keyword>
<keyword id="KW-0808">Transferase</keyword>
<organism>
    <name type="scientific">Novosphingobium aromaticivorans (strain ATCC 700278 / DSM 12444 / CCUG 56034 / CIP 105152 / NBRC 16084 / F199)</name>
    <dbReference type="NCBI Taxonomy" id="279238"/>
    <lineage>
        <taxon>Bacteria</taxon>
        <taxon>Pseudomonadati</taxon>
        <taxon>Pseudomonadota</taxon>
        <taxon>Alphaproteobacteria</taxon>
        <taxon>Sphingomonadales</taxon>
        <taxon>Sphingomonadaceae</taxon>
        <taxon>Novosphingobium</taxon>
    </lineage>
</organism>
<feature type="chain" id="PRO_0000335387" description="Ribosomal RNA small subunit methyltransferase G">
    <location>
        <begin position="1"/>
        <end position="230"/>
    </location>
</feature>
<feature type="binding site" evidence="1">
    <location>
        <position position="80"/>
    </location>
    <ligand>
        <name>S-adenosyl-L-methionine</name>
        <dbReference type="ChEBI" id="CHEBI:59789"/>
    </ligand>
</feature>
<feature type="binding site" evidence="1">
    <location>
        <position position="85"/>
    </location>
    <ligand>
        <name>S-adenosyl-L-methionine</name>
        <dbReference type="ChEBI" id="CHEBI:59789"/>
    </ligand>
</feature>
<feature type="binding site" evidence="1">
    <location>
        <begin position="131"/>
        <end position="132"/>
    </location>
    <ligand>
        <name>S-adenosyl-L-methionine</name>
        <dbReference type="ChEBI" id="CHEBI:59789"/>
    </ligand>
</feature>
<feature type="binding site" evidence="1">
    <location>
        <position position="145"/>
    </location>
    <ligand>
        <name>S-adenosyl-L-methionine</name>
        <dbReference type="ChEBI" id="CHEBI:59789"/>
    </ligand>
</feature>
<sequence length="230" mass="25305">MTLVTEVEAQAWLREVLHVDDASMSRLAHLVDLLLAENERQNLVARGTLPHVWVRHIVDSAQLLHVSRETSGSGEWLDLGTGAGFPGLVIAAIQSDRPVTLVDSRRLRTEWLQRAADALELSNVRVILSRVEDLESGAYAAISARAFAPLDKLLAISARFSTPDTLWLLPKGAGAQHELQMLPESWHHMFHVEQSLTDPAAGIIVGRLLAGKQPAPHVSRQQAPRKGKRT</sequence>
<gene>
    <name evidence="1" type="primary">rsmG</name>
    <name type="ordered locus">Saro_0135</name>
</gene>